<evidence type="ECO:0000255" key="1">
    <source>
        <dbReference type="HAMAP-Rule" id="MF_00323"/>
    </source>
</evidence>
<sequence length="312" mass="35760">MEKKKIGLLVMAYGTPYKEEDIEPYYTHIRHGRKPDPEALQDLKERYEAIGGISPLAKITEEQTKALEKKLNANQDQYEFKAYIGLKHIHPFIEDTVEEMAKDGIKEAISLVLAPHYSTFSVKSYNKRANETAEKYGIQLDSVEDWYTEPGFIKFWADGIKATYAEMTEEERNNSVLIVSAHSLPEKILKDGDPYKHQLEETAKLIVEEADVKNYAVGWQSEGNTPDPWLGPDVQDLTRELYESEGYKAFIYTPVGFVADHLEVLYDNDYECKVVCDEIGASYYRPDMPNVHPEFIETLANVVMKKAKSEVR</sequence>
<dbReference type="EC" id="4.99.1.9" evidence="1"/>
<dbReference type="EMBL" id="BA000028">
    <property type="protein sequence ID" value="BAC13124.1"/>
    <property type="molecule type" value="Genomic_DNA"/>
</dbReference>
<dbReference type="RefSeq" id="WP_011065568.1">
    <property type="nucleotide sequence ID" value="NC_004193.1"/>
</dbReference>
<dbReference type="SMR" id="Q8ERX9"/>
<dbReference type="STRING" id="221109.gene:10733407"/>
<dbReference type="KEGG" id="oih:OB1168"/>
<dbReference type="eggNOG" id="COG0276">
    <property type="taxonomic scope" value="Bacteria"/>
</dbReference>
<dbReference type="HOGENOM" id="CLU_018884_2_1_9"/>
<dbReference type="OrthoDB" id="9776380at2"/>
<dbReference type="PhylomeDB" id="Q8ERX9"/>
<dbReference type="UniPathway" id="UPA00252"/>
<dbReference type="Proteomes" id="UP000000822">
    <property type="component" value="Chromosome"/>
</dbReference>
<dbReference type="GO" id="GO:0005737">
    <property type="term" value="C:cytoplasm"/>
    <property type="evidence" value="ECO:0007669"/>
    <property type="project" value="UniProtKB-SubCell"/>
</dbReference>
<dbReference type="GO" id="GO:0004325">
    <property type="term" value="F:ferrochelatase activity"/>
    <property type="evidence" value="ECO:0007669"/>
    <property type="project" value="UniProtKB-UniRule"/>
</dbReference>
<dbReference type="GO" id="GO:0046872">
    <property type="term" value="F:metal ion binding"/>
    <property type="evidence" value="ECO:0007669"/>
    <property type="project" value="UniProtKB-KW"/>
</dbReference>
<dbReference type="GO" id="GO:0006783">
    <property type="term" value="P:heme biosynthetic process"/>
    <property type="evidence" value="ECO:0007669"/>
    <property type="project" value="UniProtKB-UniRule"/>
</dbReference>
<dbReference type="CDD" id="cd00419">
    <property type="entry name" value="Ferrochelatase_C"/>
    <property type="match status" value="1"/>
</dbReference>
<dbReference type="CDD" id="cd03411">
    <property type="entry name" value="Ferrochelatase_N"/>
    <property type="match status" value="1"/>
</dbReference>
<dbReference type="FunFam" id="3.40.50.1400:FF:000009">
    <property type="entry name" value="Ferrochelatase"/>
    <property type="match status" value="1"/>
</dbReference>
<dbReference type="Gene3D" id="3.40.50.1400">
    <property type="match status" value="2"/>
</dbReference>
<dbReference type="HAMAP" id="MF_00323">
    <property type="entry name" value="Ferrochelatase"/>
    <property type="match status" value="1"/>
</dbReference>
<dbReference type="InterPro" id="IPR001015">
    <property type="entry name" value="Ferrochelatase"/>
</dbReference>
<dbReference type="InterPro" id="IPR019772">
    <property type="entry name" value="Ferrochelatase_AS"/>
</dbReference>
<dbReference type="InterPro" id="IPR033644">
    <property type="entry name" value="Ferrochelatase_C"/>
</dbReference>
<dbReference type="InterPro" id="IPR033659">
    <property type="entry name" value="Ferrochelatase_N"/>
</dbReference>
<dbReference type="NCBIfam" id="TIGR00109">
    <property type="entry name" value="hemH"/>
    <property type="match status" value="1"/>
</dbReference>
<dbReference type="NCBIfam" id="NF009095">
    <property type="entry name" value="PRK12435.1"/>
    <property type="match status" value="1"/>
</dbReference>
<dbReference type="PANTHER" id="PTHR11108">
    <property type="entry name" value="FERROCHELATASE"/>
    <property type="match status" value="1"/>
</dbReference>
<dbReference type="PANTHER" id="PTHR11108:SF1">
    <property type="entry name" value="FERROCHELATASE, MITOCHONDRIAL"/>
    <property type="match status" value="1"/>
</dbReference>
<dbReference type="Pfam" id="PF00762">
    <property type="entry name" value="Ferrochelatase"/>
    <property type="match status" value="1"/>
</dbReference>
<dbReference type="SUPFAM" id="SSF53800">
    <property type="entry name" value="Chelatase"/>
    <property type="match status" value="1"/>
</dbReference>
<dbReference type="PROSITE" id="PS00534">
    <property type="entry name" value="FERROCHELATASE"/>
    <property type="match status" value="1"/>
</dbReference>
<feature type="chain" id="PRO_0000175173" description="Coproporphyrin III ferrochelatase">
    <location>
        <begin position="1"/>
        <end position="312"/>
    </location>
</feature>
<feature type="binding site" description="axial binding residue" evidence="1">
    <location>
        <position position="13"/>
    </location>
    <ligand>
        <name>Fe-coproporphyrin III</name>
        <dbReference type="ChEBI" id="CHEBI:68438"/>
    </ligand>
    <ligandPart>
        <name>Fe</name>
        <dbReference type="ChEBI" id="CHEBI:18248"/>
    </ligandPart>
</feature>
<feature type="binding site" evidence="1">
    <location>
        <position position="30"/>
    </location>
    <ligand>
        <name>Fe-coproporphyrin III</name>
        <dbReference type="ChEBI" id="CHEBI:68438"/>
    </ligand>
</feature>
<feature type="binding site" evidence="1">
    <location>
        <begin position="46"/>
        <end position="47"/>
    </location>
    <ligand>
        <name>Fe-coproporphyrin III</name>
        <dbReference type="ChEBI" id="CHEBI:68438"/>
    </ligand>
</feature>
<feature type="binding site" evidence="1">
    <location>
        <position position="54"/>
    </location>
    <ligand>
        <name>Fe-coproporphyrin III</name>
        <dbReference type="ChEBI" id="CHEBI:68438"/>
    </ligand>
</feature>
<feature type="binding site" evidence="1">
    <location>
        <position position="125"/>
    </location>
    <ligand>
        <name>Fe-coproporphyrin III</name>
        <dbReference type="ChEBI" id="CHEBI:68438"/>
    </ligand>
</feature>
<feature type="binding site" evidence="1">
    <location>
        <position position="182"/>
    </location>
    <ligand>
        <name>Fe(2+)</name>
        <dbReference type="ChEBI" id="CHEBI:29033"/>
    </ligand>
</feature>
<feature type="binding site" evidence="1">
    <location>
        <position position="263"/>
    </location>
    <ligand>
        <name>Fe(2+)</name>
        <dbReference type="ChEBI" id="CHEBI:29033"/>
    </ligand>
</feature>
<accession>Q8ERX9</accession>
<organism>
    <name type="scientific">Oceanobacillus iheyensis (strain DSM 14371 / CIP 107618 / JCM 11309 / KCTC 3954 / HTE831)</name>
    <dbReference type="NCBI Taxonomy" id="221109"/>
    <lineage>
        <taxon>Bacteria</taxon>
        <taxon>Bacillati</taxon>
        <taxon>Bacillota</taxon>
        <taxon>Bacilli</taxon>
        <taxon>Bacillales</taxon>
        <taxon>Bacillaceae</taxon>
        <taxon>Oceanobacillus</taxon>
    </lineage>
</organism>
<keyword id="KW-0963">Cytoplasm</keyword>
<keyword id="KW-0350">Heme biosynthesis</keyword>
<keyword id="KW-0408">Iron</keyword>
<keyword id="KW-0456">Lyase</keyword>
<keyword id="KW-0479">Metal-binding</keyword>
<keyword id="KW-0627">Porphyrin biosynthesis</keyword>
<keyword id="KW-1185">Reference proteome</keyword>
<comment type="function">
    <text evidence="1">Involved in coproporphyrin-dependent heme b biosynthesis. Catalyzes the insertion of ferrous iron into coproporphyrin III to form Fe-coproporphyrin III.</text>
</comment>
<comment type="catalytic activity">
    <reaction evidence="1">
        <text>Fe-coproporphyrin III + 2 H(+) = coproporphyrin III + Fe(2+)</text>
        <dbReference type="Rhea" id="RHEA:49572"/>
        <dbReference type="ChEBI" id="CHEBI:15378"/>
        <dbReference type="ChEBI" id="CHEBI:29033"/>
        <dbReference type="ChEBI" id="CHEBI:68438"/>
        <dbReference type="ChEBI" id="CHEBI:131725"/>
        <dbReference type="EC" id="4.99.1.9"/>
    </reaction>
    <physiologicalReaction direction="right-to-left" evidence="1">
        <dbReference type="Rhea" id="RHEA:49574"/>
    </physiologicalReaction>
</comment>
<comment type="pathway">
    <text evidence="1">Porphyrin-containing compound metabolism; protoheme biosynthesis.</text>
</comment>
<comment type="subcellular location">
    <subcellularLocation>
        <location evidence="1">Cytoplasm</location>
    </subcellularLocation>
</comment>
<comment type="similarity">
    <text evidence="1">Belongs to the ferrochelatase family.</text>
</comment>
<name>CPFC_OCEIH</name>
<protein>
    <recommendedName>
        <fullName evidence="1">Coproporphyrin III ferrochelatase</fullName>
        <ecNumber evidence="1">4.99.1.9</ecNumber>
    </recommendedName>
</protein>
<reference key="1">
    <citation type="journal article" date="2002" name="Nucleic Acids Res.">
        <title>Genome sequence of Oceanobacillus iheyensis isolated from the Iheya Ridge and its unexpected adaptive capabilities to extreme environments.</title>
        <authorList>
            <person name="Takami H."/>
            <person name="Takaki Y."/>
            <person name="Uchiyama I."/>
        </authorList>
    </citation>
    <scope>NUCLEOTIDE SEQUENCE [LARGE SCALE GENOMIC DNA]</scope>
    <source>
        <strain>DSM 14371 / CIP 107618 / JCM 11309 / KCTC 3954 / HTE831</strain>
    </source>
</reference>
<gene>
    <name evidence="1" type="primary">cpfC</name>
    <name type="ordered locus">OB1168</name>
</gene>
<proteinExistence type="inferred from homology"/>